<dbReference type="EC" id="4.2.1.70" evidence="1 2 3"/>
<dbReference type="EMBL" id="U00007">
    <property type="protein sequence ID" value="AAA60517.1"/>
    <property type="molecule type" value="Genomic_DNA"/>
</dbReference>
<dbReference type="EMBL" id="U00096">
    <property type="protein sequence ID" value="AAC75226.1"/>
    <property type="molecule type" value="Genomic_DNA"/>
</dbReference>
<dbReference type="EMBL" id="AP009048">
    <property type="protein sequence ID" value="BAE76642.1"/>
    <property type="molecule type" value="Genomic_DNA"/>
</dbReference>
<dbReference type="PIR" id="D64985">
    <property type="entry name" value="D64985"/>
</dbReference>
<dbReference type="RefSeq" id="NP_416670.1">
    <property type="nucleotide sequence ID" value="NC_000913.3"/>
</dbReference>
<dbReference type="RefSeq" id="WP_001292460.1">
    <property type="nucleotide sequence ID" value="NZ_LN832404.1"/>
</dbReference>
<dbReference type="PDB" id="4GIJ">
    <property type="method" value="X-ray"/>
    <property type="resolution" value="1.94 A"/>
    <property type="chains" value="A/B/C=1-312"/>
</dbReference>
<dbReference type="PDB" id="4GIK">
    <property type="method" value="X-ray"/>
    <property type="resolution" value="2.19 A"/>
    <property type="chains" value="A/B/C=1-312"/>
</dbReference>
<dbReference type="PDB" id="4GIL">
    <property type="method" value="X-ray"/>
    <property type="resolution" value="2.54 A"/>
    <property type="chains" value="A/B/C=1-312"/>
</dbReference>
<dbReference type="PDB" id="4GIM">
    <property type="method" value="X-ray"/>
    <property type="resolution" value="1.80 A"/>
    <property type="chains" value="A/B/C=1-312"/>
</dbReference>
<dbReference type="PDBsum" id="4GIJ"/>
<dbReference type="PDBsum" id="4GIK"/>
<dbReference type="PDBsum" id="4GIL"/>
<dbReference type="PDBsum" id="4GIM"/>
<dbReference type="SMR" id="P33025"/>
<dbReference type="BioGRID" id="4261702">
    <property type="interactions" value="18"/>
</dbReference>
<dbReference type="DIP" id="DIP-11926N"/>
<dbReference type="FunCoup" id="P33025">
    <property type="interactions" value="377"/>
</dbReference>
<dbReference type="IntAct" id="P33025">
    <property type="interactions" value="13"/>
</dbReference>
<dbReference type="STRING" id="511145.b2165"/>
<dbReference type="jPOST" id="P33025"/>
<dbReference type="PaxDb" id="511145-b2165"/>
<dbReference type="EnsemblBacteria" id="AAC75226">
    <property type="protein sequence ID" value="AAC75226"/>
    <property type="gene ID" value="b2165"/>
</dbReference>
<dbReference type="GeneID" id="946699"/>
<dbReference type="KEGG" id="ecj:JW2152"/>
<dbReference type="KEGG" id="eco:b2165"/>
<dbReference type="KEGG" id="ecoc:C3026_12130"/>
<dbReference type="PATRIC" id="fig|1411691.4.peg.74"/>
<dbReference type="EchoBASE" id="EB1968"/>
<dbReference type="eggNOG" id="COG2313">
    <property type="taxonomic scope" value="Bacteria"/>
</dbReference>
<dbReference type="HOGENOM" id="CLU_012201_0_1_6"/>
<dbReference type="InParanoid" id="P33025"/>
<dbReference type="OMA" id="GVHREWT"/>
<dbReference type="OrthoDB" id="9805870at2"/>
<dbReference type="PhylomeDB" id="P33025"/>
<dbReference type="BioCyc" id="EcoCyc:EG12033-MONOMER"/>
<dbReference type="BioCyc" id="MetaCyc:EG12033-MONOMER"/>
<dbReference type="BRENDA" id="4.2.1.70">
    <property type="organism ID" value="2026"/>
</dbReference>
<dbReference type="SABIO-RK" id="P33025"/>
<dbReference type="EvolutionaryTrace" id="P33025"/>
<dbReference type="PRO" id="PR:P33025"/>
<dbReference type="Proteomes" id="UP000000625">
    <property type="component" value="Chromosome"/>
</dbReference>
<dbReference type="GO" id="GO:0005737">
    <property type="term" value="C:cytoplasm"/>
    <property type="evidence" value="ECO:0000318"/>
    <property type="project" value="GO_Central"/>
</dbReference>
<dbReference type="GO" id="GO:0032991">
    <property type="term" value="C:protein-containing complex"/>
    <property type="evidence" value="ECO:0000314"/>
    <property type="project" value="EcoCyc"/>
</dbReference>
<dbReference type="GO" id="GO:0016798">
    <property type="term" value="F:hydrolase activity, acting on glycosyl bonds"/>
    <property type="evidence" value="ECO:0000314"/>
    <property type="project" value="EcoliWiki"/>
</dbReference>
<dbReference type="GO" id="GO:0042802">
    <property type="term" value="F:identical protein binding"/>
    <property type="evidence" value="ECO:0000314"/>
    <property type="project" value="EcoCyc"/>
</dbReference>
<dbReference type="GO" id="GO:0030145">
    <property type="term" value="F:manganese ion binding"/>
    <property type="evidence" value="ECO:0000314"/>
    <property type="project" value="EcoCyc"/>
</dbReference>
<dbReference type="GO" id="GO:0004730">
    <property type="term" value="F:pseudouridylate synthase activity"/>
    <property type="evidence" value="ECO:0000314"/>
    <property type="project" value="EcoCyc"/>
</dbReference>
<dbReference type="GO" id="GO:0046113">
    <property type="term" value="P:nucleobase catabolic process"/>
    <property type="evidence" value="ECO:0007669"/>
    <property type="project" value="UniProtKB-UniRule"/>
</dbReference>
<dbReference type="FunFam" id="3.40.1790.10:FF:000001">
    <property type="entry name" value="Indigoidine synthase A family protein"/>
    <property type="match status" value="1"/>
</dbReference>
<dbReference type="Gene3D" id="3.40.1790.10">
    <property type="entry name" value="Indigoidine synthase domain"/>
    <property type="match status" value="1"/>
</dbReference>
<dbReference type="HAMAP" id="MF_01876">
    <property type="entry name" value="PsiMP_glycosidase"/>
    <property type="match status" value="1"/>
</dbReference>
<dbReference type="InterPro" id="IPR022830">
    <property type="entry name" value="Indigdn_synthA-like"/>
</dbReference>
<dbReference type="InterPro" id="IPR007342">
    <property type="entry name" value="PsuG"/>
</dbReference>
<dbReference type="PANTHER" id="PTHR42909:SF1">
    <property type="entry name" value="CARBOHYDRATE KINASE PFKB DOMAIN-CONTAINING PROTEIN"/>
    <property type="match status" value="1"/>
</dbReference>
<dbReference type="PANTHER" id="PTHR42909">
    <property type="entry name" value="ZGC:136858"/>
    <property type="match status" value="1"/>
</dbReference>
<dbReference type="Pfam" id="PF04227">
    <property type="entry name" value="Indigoidine_A"/>
    <property type="match status" value="1"/>
</dbReference>
<dbReference type="SUPFAM" id="SSF110581">
    <property type="entry name" value="Indigoidine synthase A-like"/>
    <property type="match status" value="1"/>
</dbReference>
<name>PSUG_ECOLI</name>
<keyword id="KW-0002">3D-structure</keyword>
<keyword id="KW-0326">Glycosidase</keyword>
<keyword id="KW-0378">Hydrolase</keyword>
<keyword id="KW-0456">Lyase</keyword>
<keyword id="KW-0464">Manganese</keyword>
<keyword id="KW-0479">Metal-binding</keyword>
<keyword id="KW-1185">Reference proteome</keyword>
<comment type="function">
    <text evidence="1 2 3">Catalyzes the reversible cleavage of pseudouridine 5'-phosphate (PsiMP) to ribose 5-phosphate and uracil. Functions biologically in the cleavage direction, as part of a pseudouridine degradation pathway.</text>
</comment>
<comment type="catalytic activity">
    <reaction evidence="1 2 3">
        <text>D-ribose 5-phosphate + uracil = psi-UMP + H2O</text>
        <dbReference type="Rhea" id="RHEA:18337"/>
        <dbReference type="ChEBI" id="CHEBI:15377"/>
        <dbReference type="ChEBI" id="CHEBI:17568"/>
        <dbReference type="ChEBI" id="CHEBI:58380"/>
        <dbReference type="ChEBI" id="CHEBI:78346"/>
        <dbReference type="EC" id="4.2.1.70"/>
    </reaction>
</comment>
<comment type="cofactor">
    <cofactor evidence="1 2 3">
        <name>Mn(2+)</name>
        <dbReference type="ChEBI" id="CHEBI:29035"/>
    </cofactor>
    <cofactor evidence="2 3">
        <name>Fe(2+)</name>
        <dbReference type="ChEBI" id="CHEBI:29033"/>
    </cofactor>
    <cofactor evidence="2 3">
        <name>Co(2+)</name>
        <dbReference type="ChEBI" id="CHEBI:48828"/>
    </cofactor>
    <text evidence="2 3">Binds 1 manganese ion per subunit. Can also use Fe(2+) and Co(2+). The unusual metal binding site is heavily hydrated, coordinated with an aspartate side chain and five water molecules, and likely plays a role in anchoring the PsiMP phosphate.</text>
</comment>
<comment type="activity regulation">
    <text evidence="2">Inhibited by Zn(2+) and Ni(2+).</text>
</comment>
<comment type="biophysicochemical properties">
    <kinetics>
        <KM evidence="2">60 uM for pseudouridine 5'-phosphate (in the presence of 0.5 mM Mn(2+))</KM>
        <KM evidence="3">169.6 uM for uracil</KM>
        <text evidence="3">kcat is 3.74 sec(-1) for the synthesis of PsiMP.</text>
    </kinetics>
</comment>
<comment type="subunit">
    <text evidence="1 3">Homotrimer.</text>
</comment>
<comment type="similarity">
    <text evidence="1">Belongs to the pseudouridine-5'-phosphate glycosidase family.</text>
</comment>
<proteinExistence type="evidence at protein level"/>
<organism>
    <name type="scientific">Escherichia coli (strain K12)</name>
    <dbReference type="NCBI Taxonomy" id="83333"/>
    <lineage>
        <taxon>Bacteria</taxon>
        <taxon>Pseudomonadati</taxon>
        <taxon>Pseudomonadota</taxon>
        <taxon>Gammaproteobacteria</taxon>
        <taxon>Enterobacterales</taxon>
        <taxon>Enterobacteriaceae</taxon>
        <taxon>Escherichia</taxon>
    </lineage>
</organism>
<evidence type="ECO:0000255" key="1">
    <source>
        <dbReference type="HAMAP-Rule" id="MF_01876"/>
    </source>
</evidence>
<evidence type="ECO:0000269" key="2">
    <source>
    </source>
</evidence>
<evidence type="ECO:0000269" key="3">
    <source>
    </source>
</evidence>
<evidence type="ECO:0000303" key="4">
    <source>
    </source>
</evidence>
<evidence type="ECO:0000303" key="5">
    <source>
    </source>
</evidence>
<evidence type="ECO:0007829" key="6">
    <source>
        <dbReference type="PDB" id="4GIM"/>
    </source>
</evidence>
<gene>
    <name evidence="1" type="primary">psuG</name>
    <name type="synonym">pscG</name>
    <name evidence="4" type="synonym">yeiN</name>
    <name type="ordered locus">b2165</name>
    <name type="ordered locus">JW2152</name>
</gene>
<reference key="1">
    <citation type="submission" date="1993-10" db="EMBL/GenBank/DDBJ databases">
        <title>Automated multiplex sequencing of the E.coli genome.</title>
        <authorList>
            <person name="Richterich P."/>
            <person name="Lakey N."/>
            <person name="Gryan G."/>
            <person name="Jaehn L."/>
            <person name="Mintz L."/>
            <person name="Robison K."/>
            <person name="Church G.M."/>
        </authorList>
    </citation>
    <scope>NUCLEOTIDE SEQUENCE [LARGE SCALE GENOMIC DNA]</scope>
    <source>
        <strain>K12 / BHB2600</strain>
    </source>
</reference>
<reference key="2">
    <citation type="journal article" date="1997" name="Science">
        <title>The complete genome sequence of Escherichia coli K-12.</title>
        <authorList>
            <person name="Blattner F.R."/>
            <person name="Plunkett G. III"/>
            <person name="Bloch C.A."/>
            <person name="Perna N.T."/>
            <person name="Burland V."/>
            <person name="Riley M."/>
            <person name="Collado-Vides J."/>
            <person name="Glasner J.D."/>
            <person name="Rode C.K."/>
            <person name="Mayhew G.F."/>
            <person name="Gregor J."/>
            <person name="Davis N.W."/>
            <person name="Kirkpatrick H.A."/>
            <person name="Goeden M.A."/>
            <person name="Rose D.J."/>
            <person name="Mau B."/>
            <person name="Shao Y."/>
        </authorList>
    </citation>
    <scope>NUCLEOTIDE SEQUENCE [LARGE SCALE GENOMIC DNA]</scope>
    <source>
        <strain>K12 / MG1655 / ATCC 47076</strain>
    </source>
</reference>
<reference key="3">
    <citation type="journal article" date="2006" name="Mol. Syst. Biol.">
        <title>Highly accurate genome sequences of Escherichia coli K-12 strains MG1655 and W3110.</title>
        <authorList>
            <person name="Hayashi K."/>
            <person name="Morooka N."/>
            <person name="Yamamoto Y."/>
            <person name="Fujita K."/>
            <person name="Isono K."/>
            <person name="Choi S."/>
            <person name="Ohtsubo E."/>
            <person name="Baba T."/>
            <person name="Wanner B.L."/>
            <person name="Mori H."/>
            <person name="Horiuchi T."/>
        </authorList>
    </citation>
    <scope>NUCLEOTIDE SEQUENCE [LARGE SCALE GENOMIC DNA]</scope>
    <source>
        <strain>K12 / W3110 / ATCC 27325 / DSM 5911</strain>
    </source>
</reference>
<reference key="4">
    <citation type="journal article" date="2008" name="J. Biol. Chem.">
        <title>Molecular identification of pseudouridine-metabolizing enzymes.</title>
        <authorList>
            <person name="Preumont A."/>
            <person name="Snoussi K."/>
            <person name="Stroobant V."/>
            <person name="Collet J.-F."/>
            <person name="Van Schaftingen E."/>
        </authorList>
    </citation>
    <scope>FUNCTION</scope>
    <scope>CATALYTIC ACTIVITY</scope>
    <scope>COFACTOR</scope>
    <scope>ACTIVITY REGULATION</scope>
    <scope>BIOPHYSICOCHEMICAL PROPERTIES</scope>
    <source>
        <strain>K12</strain>
    </source>
</reference>
<reference key="5">
    <citation type="journal article" date="2012" name="Biochemistry">
        <title>Pseudouridine monophosphate glycosidase: a new glycosidase mechanism.</title>
        <authorList>
            <person name="Huang S."/>
            <person name="Mahanta N."/>
            <person name="Begley T.P."/>
            <person name="Ealick S.E."/>
        </authorList>
    </citation>
    <scope>X-RAY CRYSTALLOGRAPHY (1.80 ANGSTROMS) OF APOENZYME AND COMPLEX WITH D-RIBITOL 5-PHOSPHATE AND WILD-TYPE AND MUTANT ALA-166 IN COMPLEX WITH PSEUDOURIDINE-5'-PHOSPHATE AND MANGANESE</scope>
    <scope>FUNCTION</scope>
    <scope>CATALYTIC ACTIVITY</scope>
    <scope>BIOPHYSICOCHEMICAL PROPERTIES</scope>
    <scope>SUBUNIT</scope>
    <scope>ACTIVE SITE</scope>
    <scope>REACTION MECHANISM</scope>
    <scope>MUTAGENESIS OF GLU-31; LYS-93; ASP-149; LYS-166 AND ASN-289</scope>
    <source>
        <strain>K12</strain>
    </source>
</reference>
<protein>
    <recommendedName>
        <fullName evidence="1 4">Pseudouridine-5'-phosphate glycosidase</fullName>
        <shortName evidence="1 4">PsiMP glycosidase</shortName>
        <ecNumber evidence="1 2 3">4.2.1.70</ecNumber>
    </recommendedName>
</protein>
<feature type="chain" id="PRO_0000169150" description="Pseudouridine-5'-phosphate glycosidase">
    <location>
        <begin position="1"/>
        <end position="312"/>
    </location>
</feature>
<feature type="active site" description="Proton donor" evidence="1 5">
    <location>
        <position position="31"/>
    </location>
</feature>
<feature type="active site" description="Nucleophile" evidence="1 5">
    <location>
        <position position="166"/>
    </location>
</feature>
<feature type="binding site" evidence="1 3">
    <location>
        <position position="93"/>
    </location>
    <ligand>
        <name>substrate</name>
    </ligand>
</feature>
<feature type="binding site" evidence="1 3">
    <location>
        <position position="113"/>
    </location>
    <ligand>
        <name>substrate</name>
    </ligand>
</feature>
<feature type="binding site" evidence="1 3">
    <location>
        <position position="145"/>
    </location>
    <ligand>
        <name>Mn(2+)</name>
        <dbReference type="ChEBI" id="CHEBI:29035"/>
    </ligand>
</feature>
<feature type="binding site" evidence="1 3">
    <location>
        <begin position="147"/>
        <end position="149"/>
    </location>
    <ligand>
        <name>substrate</name>
    </ligand>
</feature>
<feature type="mutagenesis site" description="7500-fold decrease in reaction rate while little change in substrate affinity." evidence="3">
    <original>E</original>
    <variation>A</variation>
    <location>
        <position position="31"/>
    </location>
</feature>
<feature type="mutagenesis site" description="17-fold decrease in reaction rate while modest decrease in substrate affinity." evidence="3">
    <original>K</original>
    <variation>A</variation>
    <location>
        <position position="93"/>
    </location>
</feature>
<feature type="mutagenesis site" description="Loss of activity." evidence="3">
    <original>D</original>
    <variation>A</variation>
    <location>
        <position position="149"/>
    </location>
</feature>
<feature type="mutagenesis site" description="2900-fold decrease in reaction rate while no change in substrate affinity." evidence="3">
    <original>K</original>
    <variation>A</variation>
    <location>
        <position position="166"/>
    </location>
</feature>
<feature type="mutagenesis site" description="17-fold decrease in reaction rate while modest decrease in substrate affinity." evidence="3">
    <original>N</original>
    <variation>A</variation>
    <location>
        <position position="289"/>
    </location>
</feature>
<feature type="turn" evidence="6">
    <location>
        <begin position="8"/>
        <end position="10"/>
    </location>
</feature>
<feature type="strand" evidence="6">
    <location>
        <begin position="11"/>
        <end position="13"/>
    </location>
</feature>
<feature type="helix" evidence="6">
    <location>
        <begin position="15"/>
        <end position="22"/>
    </location>
</feature>
<feature type="strand" evidence="6">
    <location>
        <begin position="27"/>
        <end position="30"/>
    </location>
</feature>
<feature type="helix" evidence="6">
    <location>
        <begin position="33"/>
        <end position="36"/>
    </location>
</feature>
<feature type="helix" evidence="6">
    <location>
        <begin position="43"/>
        <end position="57"/>
    </location>
</feature>
<feature type="strand" evidence="6">
    <location>
        <begin position="61"/>
        <end position="68"/>
    </location>
</feature>
<feature type="strand" evidence="6">
    <location>
        <begin position="71"/>
        <end position="75"/>
    </location>
</feature>
<feature type="helix" evidence="6">
    <location>
        <begin position="78"/>
        <end position="87"/>
    </location>
</feature>
<feature type="helix" evidence="6">
    <location>
        <begin position="88"/>
        <end position="90"/>
    </location>
</feature>
<feature type="strand" evidence="6">
    <location>
        <begin position="91"/>
        <end position="94"/>
    </location>
</feature>
<feature type="turn" evidence="6">
    <location>
        <begin position="96"/>
        <end position="98"/>
    </location>
</feature>
<feature type="helix" evidence="6">
    <location>
        <begin position="99"/>
        <end position="104"/>
    </location>
</feature>
<feature type="strand" evidence="6">
    <location>
        <begin position="109"/>
        <end position="111"/>
    </location>
</feature>
<feature type="helix" evidence="6">
    <location>
        <begin position="113"/>
        <end position="122"/>
    </location>
</feature>
<feature type="strand" evidence="6">
    <location>
        <begin position="127"/>
        <end position="129"/>
    </location>
</feature>
<feature type="helix" evidence="6">
    <location>
        <begin position="140"/>
        <end position="143"/>
    </location>
</feature>
<feature type="helix" evidence="6">
    <location>
        <begin position="148"/>
        <end position="155"/>
    </location>
</feature>
<feature type="strand" evidence="6">
    <location>
        <begin position="159"/>
        <end position="162"/>
    </location>
</feature>
<feature type="helix" evidence="6">
    <location>
        <begin position="171"/>
        <end position="180"/>
    </location>
</feature>
<feature type="strand" evidence="6">
    <location>
        <begin position="185"/>
        <end position="189"/>
    </location>
</feature>
<feature type="strand" evidence="6">
    <location>
        <begin position="202"/>
        <end position="204"/>
    </location>
</feature>
<feature type="strand" evidence="6">
    <location>
        <begin position="206"/>
        <end position="209"/>
    </location>
</feature>
<feature type="helix" evidence="6">
    <location>
        <begin position="212"/>
        <end position="224"/>
    </location>
</feature>
<feature type="strand" evidence="6">
    <location>
        <begin position="231"/>
        <end position="234"/>
    </location>
</feature>
<feature type="helix" evidence="6">
    <location>
        <begin position="239"/>
        <end position="241"/>
    </location>
</feature>
<feature type="helix" evidence="6">
    <location>
        <begin position="245"/>
        <end position="262"/>
    </location>
</feature>
<feature type="helix" evidence="6">
    <location>
        <begin position="266"/>
        <end position="268"/>
    </location>
</feature>
<feature type="helix" evidence="6">
    <location>
        <begin position="269"/>
        <end position="280"/>
    </location>
</feature>
<feature type="turn" evidence="6">
    <location>
        <begin position="281"/>
        <end position="283"/>
    </location>
</feature>
<feature type="helix" evidence="6">
    <location>
        <begin position="284"/>
        <end position="310"/>
    </location>
</feature>
<accession>P33025</accession>
<accession>Q2MAR4</accession>
<sequence length="312" mass="32910">MSELKISPELLQISPEVQDALKNKKPVVALESTIISHGMPFPQNAQTAIEVEETIRKQGAVPATIAIIGGVMKVGLSKEEIELLGREGHNVTKVSRRDLPFVVAAGKNGATTVASTMIIAALAGIKVFATGGIGGVHRGAEHTFDISADLQELANTNVTVVCAGAKSILDLGLTTEYLETFGVPLIGYQTKALPAFFCRTSPFDVSIRLDSASEIARAMVVKWQSGLNGGLVVANPIPEQFAMPEHTINAAIDQAVAEAEAQGVIGKESTPFLLARVAELTGGDSLKSNIQLVFNNAILASEIAKEYQRLAG</sequence>